<reference key="1">
    <citation type="journal article" date="1993" name="J. Biol. Chem.">
        <title>Cell-specific translational regulation of S-adenosylmethionine decarboxylase mRNA. Dependence on translation and coding capacity of the cis-acting upstream open reading frame.</title>
        <authorList>
            <person name="Hill J.R."/>
            <person name="Morris D.R."/>
        </authorList>
    </citation>
    <scope>NUCLEOTIDE SEQUENCE [MRNA]</scope>
</reference>
<reference key="2">
    <citation type="submission" date="2006-09" db="EMBL/GenBank/DDBJ databases">
        <authorList>
            <consortium name="NIH - Mammalian Gene Collection (MGC) project"/>
        </authorList>
    </citation>
    <scope>NUCLEOTIDE SEQUENCE [LARGE SCALE MRNA]</scope>
    <source>
        <strain>Hereford</strain>
        <tissue>Brain cortex</tissue>
    </source>
</reference>
<reference key="3">
    <citation type="journal article" date="1986" name="J. Biol. Chem.">
        <title>Isolation of a cDNA clone encoding S-adenosylmethionine decarboxylase. Expression of the gene in mitogen-activated lymphocytes.</title>
        <authorList>
            <person name="Mach M."/>
            <person name="White M.W."/>
            <person name="Neubauer M."/>
            <person name="Degen J.L."/>
            <person name="Morris D.R."/>
        </authorList>
    </citation>
    <scope>NUCLEOTIDE SEQUENCE [MRNA] OF 209-232</scope>
    <scope>PARTIAL PROTEIN SEQUENCE</scope>
    <scope>PROTEOLYTIC CLEAVAGE</scope>
    <scope>PYRUVATE FORMATION AT SER-68</scope>
</reference>
<accession>P50243</accession>
<accession>Q08DE3</accession>
<dbReference type="EC" id="4.1.1.50" evidence="3"/>
<dbReference type="EMBL" id="M95605">
    <property type="protein sequence ID" value="AAA30359.1"/>
    <property type="molecule type" value="mRNA"/>
</dbReference>
<dbReference type="EMBL" id="BC123795">
    <property type="protein sequence ID" value="AAI23796.1"/>
    <property type="molecule type" value="mRNA"/>
</dbReference>
<dbReference type="EMBL" id="M14289">
    <property type="protein sequence ID" value="AAA30360.1"/>
    <property type="molecule type" value="mRNA"/>
</dbReference>
<dbReference type="PIR" id="I45851">
    <property type="entry name" value="I45851"/>
</dbReference>
<dbReference type="RefSeq" id="NP_776415.1">
    <property type="nucleotide sequence ID" value="NM_173990.2"/>
</dbReference>
<dbReference type="SMR" id="P50243"/>
<dbReference type="FunCoup" id="P50243">
    <property type="interactions" value="2406"/>
</dbReference>
<dbReference type="STRING" id="9913.ENSBTAP00000065674"/>
<dbReference type="PaxDb" id="9913-ENSBTAP00000004338"/>
<dbReference type="GeneID" id="280997"/>
<dbReference type="KEGG" id="bta:280997"/>
<dbReference type="CTD" id="262"/>
<dbReference type="VEuPathDB" id="HostDB:ENSBTAG00000003342"/>
<dbReference type="eggNOG" id="KOG0788">
    <property type="taxonomic scope" value="Eukaryota"/>
</dbReference>
<dbReference type="HOGENOM" id="CLU_023050_1_0_1"/>
<dbReference type="InParanoid" id="P50243"/>
<dbReference type="OrthoDB" id="1068353at2759"/>
<dbReference type="TreeFam" id="TF313561"/>
<dbReference type="Reactome" id="R-BTA-351202">
    <property type="pathway name" value="Metabolism of polyamines"/>
</dbReference>
<dbReference type="UniPathway" id="UPA00331">
    <property type="reaction ID" value="UER00451"/>
</dbReference>
<dbReference type="Proteomes" id="UP000009136">
    <property type="component" value="Chromosome 9"/>
</dbReference>
<dbReference type="Bgee" id="ENSBTAG00000003342">
    <property type="expression patterns" value="Expressed in oocyte and 108 other cell types or tissues"/>
</dbReference>
<dbReference type="GO" id="GO:0005829">
    <property type="term" value="C:cytosol"/>
    <property type="evidence" value="ECO:0000318"/>
    <property type="project" value="GO_Central"/>
</dbReference>
<dbReference type="GO" id="GO:0004014">
    <property type="term" value="F:adenosylmethionine decarboxylase activity"/>
    <property type="evidence" value="ECO:0000318"/>
    <property type="project" value="GO_Central"/>
</dbReference>
<dbReference type="GO" id="GO:0019810">
    <property type="term" value="F:putrescine binding"/>
    <property type="evidence" value="ECO:0000318"/>
    <property type="project" value="GO_Central"/>
</dbReference>
<dbReference type="GO" id="GO:0008295">
    <property type="term" value="P:spermidine biosynthetic process"/>
    <property type="evidence" value="ECO:0000318"/>
    <property type="project" value="GO_Central"/>
</dbReference>
<dbReference type="GO" id="GO:0006597">
    <property type="term" value="P:spermine biosynthetic process"/>
    <property type="evidence" value="ECO:0000318"/>
    <property type="project" value="GO_Central"/>
</dbReference>
<dbReference type="FunFam" id="3.60.90.10:FF:000003">
    <property type="entry name" value="S-adenosylmethionine decarboxylase proenzyme"/>
    <property type="match status" value="1"/>
</dbReference>
<dbReference type="FunFam" id="3.30.360.50:FF:000003">
    <property type="entry name" value="S-adenosylmethionine decarboxylase proenzyme isoform X2"/>
    <property type="match status" value="1"/>
</dbReference>
<dbReference type="Gene3D" id="3.60.90.10">
    <property type="entry name" value="S-adenosylmethionine decarboxylase"/>
    <property type="match status" value="1"/>
</dbReference>
<dbReference type="InterPro" id="IPR048283">
    <property type="entry name" value="AdoMetDC-like"/>
</dbReference>
<dbReference type="InterPro" id="IPR001985">
    <property type="entry name" value="S-AdoMet_decarboxylase_euk"/>
</dbReference>
<dbReference type="InterPro" id="IPR016067">
    <property type="entry name" value="S-AdoMet_deCO2ase_core"/>
</dbReference>
<dbReference type="InterPro" id="IPR018166">
    <property type="entry name" value="S-AdoMet_deCO2ase_CS"/>
</dbReference>
<dbReference type="NCBIfam" id="TIGR00535">
    <property type="entry name" value="SAM_DCase"/>
    <property type="match status" value="1"/>
</dbReference>
<dbReference type="PANTHER" id="PTHR11570">
    <property type="entry name" value="S-ADENOSYLMETHIONINE DECARBOXYLASE"/>
    <property type="match status" value="1"/>
</dbReference>
<dbReference type="PANTHER" id="PTHR11570:SF0">
    <property type="entry name" value="S-ADENOSYLMETHIONINE DECARBOXYLASE PROENZYME"/>
    <property type="match status" value="1"/>
</dbReference>
<dbReference type="Pfam" id="PF01536">
    <property type="entry name" value="SAM_decarbox"/>
    <property type="match status" value="1"/>
</dbReference>
<dbReference type="PIRSF" id="PIRSF001355">
    <property type="entry name" value="S-AdenosylMet_decarboxylase"/>
    <property type="match status" value="1"/>
</dbReference>
<dbReference type="SUPFAM" id="SSF56276">
    <property type="entry name" value="S-adenosylmethionine decarboxylase"/>
    <property type="match status" value="1"/>
</dbReference>
<dbReference type="PROSITE" id="PS01336">
    <property type="entry name" value="ADOMETDC"/>
    <property type="match status" value="1"/>
</dbReference>
<evidence type="ECO:0000250" key="1"/>
<evidence type="ECO:0000250" key="2">
    <source>
        <dbReference type="UniProtKB" id="P0DMN7"/>
    </source>
</evidence>
<evidence type="ECO:0000250" key="3">
    <source>
        <dbReference type="UniProtKB" id="P17707"/>
    </source>
</evidence>
<evidence type="ECO:0000269" key="4">
    <source>
    </source>
</evidence>
<evidence type="ECO:0000305" key="5"/>
<keyword id="KW-0068">Autocatalytic cleavage</keyword>
<keyword id="KW-0210">Decarboxylase</keyword>
<keyword id="KW-0903">Direct protein sequencing</keyword>
<keyword id="KW-0456">Lyase</keyword>
<keyword id="KW-0597">Phosphoprotein</keyword>
<keyword id="KW-0620">Polyamine biosynthesis</keyword>
<keyword id="KW-0670">Pyruvate</keyword>
<keyword id="KW-1185">Reference proteome</keyword>
<keyword id="KW-0949">S-adenosyl-L-methionine</keyword>
<keyword id="KW-0704">Schiff base</keyword>
<keyword id="KW-0745">Spermidine biosynthesis</keyword>
<keyword id="KW-0865">Zymogen</keyword>
<gene>
    <name type="primary">AMD1</name>
</gene>
<organism>
    <name type="scientific">Bos taurus</name>
    <name type="common">Bovine</name>
    <dbReference type="NCBI Taxonomy" id="9913"/>
    <lineage>
        <taxon>Eukaryota</taxon>
        <taxon>Metazoa</taxon>
        <taxon>Chordata</taxon>
        <taxon>Craniata</taxon>
        <taxon>Vertebrata</taxon>
        <taxon>Euteleostomi</taxon>
        <taxon>Mammalia</taxon>
        <taxon>Eutheria</taxon>
        <taxon>Laurasiatheria</taxon>
        <taxon>Artiodactyla</taxon>
        <taxon>Ruminantia</taxon>
        <taxon>Pecora</taxon>
        <taxon>Bovidae</taxon>
        <taxon>Bovinae</taxon>
        <taxon>Bos</taxon>
    </lineage>
</organism>
<feature type="chain" id="PRO_0000029957" description="S-adenosylmethionine decarboxylase beta chain">
    <location>
        <begin position="1"/>
        <end position="67"/>
    </location>
</feature>
<feature type="chain" id="PRO_0000029958" description="S-adenosylmethionine decarboxylase alpha chain">
    <location>
        <begin position="68"/>
        <end position="334"/>
    </location>
</feature>
<feature type="active site" evidence="3">
    <location>
        <position position="8"/>
    </location>
</feature>
<feature type="active site" evidence="3">
    <location>
        <position position="11"/>
    </location>
</feature>
<feature type="active site" description="Schiff-base intermediate with substrate; via pyruvic acid" evidence="3">
    <location>
        <position position="68"/>
    </location>
</feature>
<feature type="active site" description="Proton donor; for catalytic activity" evidence="3">
    <location>
        <position position="82"/>
    </location>
</feature>
<feature type="active site" description="Proton acceptor; for processing activity" evidence="3">
    <location>
        <position position="229"/>
    </location>
</feature>
<feature type="active site" description="Proton acceptor; for processing activity" evidence="3">
    <location>
        <position position="243"/>
    </location>
</feature>
<feature type="binding site" evidence="3">
    <location>
        <position position="7"/>
    </location>
    <ligand>
        <name>substrate</name>
    </ligand>
</feature>
<feature type="binding site" evidence="3">
    <location>
        <position position="67"/>
    </location>
    <ligand>
        <name>substrate</name>
    </ligand>
</feature>
<feature type="binding site" evidence="3">
    <location>
        <position position="223"/>
    </location>
    <ligand>
        <name>substrate</name>
    </ligand>
</feature>
<feature type="binding site" evidence="3">
    <location>
        <position position="247"/>
    </location>
    <ligand>
        <name>substrate</name>
    </ligand>
</feature>
<feature type="site" description="Cleavage (non-hydrolytic); by autolysis" evidence="4">
    <location>
        <begin position="67"/>
        <end position="68"/>
    </location>
</feature>
<feature type="modified residue" description="Pyruvic acid (Ser); by autocatalysis" evidence="4">
    <location>
        <position position="68"/>
    </location>
</feature>
<feature type="modified residue" description="Phosphoserine" evidence="3">
    <location>
        <position position="298"/>
    </location>
</feature>
<sequence>MEAAHFFEGTEKLLEVWFSRQQPDANQGSGDLRTIPRSEWDILLKDVQCSIISVTKTDKQEAYVLSESSMFVSKRRFILKTCGTTLLLKALVPLLKLARDYSGFDSIQSFFYSRKNFMKPSHQGYPHRNFQEEIEFLNAIFPNGAAYCMGRMNSDCWYLYTLDFPESRVINQPDQTLEILMSELDPAVMDQFYMKDGVTAKDVTRESGIRDLIPGSVIDATMFNPCGYSMNGMKSDGTYWTIHITPEPEFSYVSFETNLSQTSYDDLIRKVVEVFKPGKFVTTLFVNQSSKCRTVLSSPQKIEGFKRLDCQSALFNDYNFVFTSFAKKQQQQQS</sequence>
<protein>
    <recommendedName>
        <fullName>S-adenosylmethionine decarboxylase proenzyme</fullName>
        <shortName>AdoMetDC</shortName>
        <shortName>SAMDC</shortName>
        <ecNumber evidence="3">4.1.1.50</ecNumber>
    </recommendedName>
    <component>
        <recommendedName>
            <fullName>S-adenosylmethionine decarboxylase alpha chain</fullName>
        </recommendedName>
    </component>
    <component>
        <recommendedName>
            <fullName>S-adenosylmethionine decarboxylase beta chain</fullName>
        </recommendedName>
    </component>
</protein>
<comment type="function">
    <text evidence="2">Essential for biosynthesis of the polyamines spermidine and spermine. Promotes maintenance and self-renewal of embryonic stem cells, by maintaining spermine levels.</text>
</comment>
<comment type="catalytic activity">
    <reaction evidence="3">
        <text>S-adenosyl-L-methionine + H(+) = S-adenosyl 3-(methylsulfanyl)propylamine + CO2</text>
        <dbReference type="Rhea" id="RHEA:15981"/>
        <dbReference type="ChEBI" id="CHEBI:15378"/>
        <dbReference type="ChEBI" id="CHEBI:16526"/>
        <dbReference type="ChEBI" id="CHEBI:57443"/>
        <dbReference type="ChEBI" id="CHEBI:59789"/>
        <dbReference type="EC" id="4.1.1.50"/>
    </reaction>
</comment>
<comment type="cofactor">
    <cofactor>
        <name>pyruvate</name>
        <dbReference type="ChEBI" id="CHEBI:15361"/>
    </cofactor>
    <text>Binds 1 pyruvoyl group covalently per subunit.</text>
</comment>
<comment type="pathway">
    <text>Amine and polyamine biosynthesis; S-adenosylmethioninamine biosynthesis; S-adenosylmethioninamine from S-adenosyl-L-methionine: step 1/1.</text>
</comment>
<comment type="subunit">
    <text evidence="1">Heterotetramer of two alpha and two beta chains.</text>
</comment>
<comment type="PTM">
    <text evidence="3 4">Is synthesized initially as an inactive proenzyme. Formation of the active enzyme involves a self-maturation process in which the active site pyruvoyl group is generated from an internal serine residue via an autocatalytic post-translational modification. Two non-identical subunits are generated from the proenzyme in this reaction, and the pyruvate is formed at the N-terminus of the alpha chain, which is derived from the carboxyl end of the proenzyme. The post-translation cleavage follows an unusual pathway, termed non-hydrolytic serinolysis, in which the side chain hydroxyl group of the serine supplies its oxygen atom to form the C-terminus of the beta chain, while the remainder of the serine residue undergoes an oxidative deamination to produce ammonia and the pyruvoyl group blocking the N-terminus of the alpha chain.</text>
</comment>
<comment type="similarity">
    <text evidence="5">Belongs to the eukaryotic AdoMetDC family.</text>
</comment>
<name>DCAM_BOVIN</name>
<proteinExistence type="evidence at protein level"/>